<feature type="signal peptide">
    <location>
        <begin position="1"/>
        <end position="23"/>
    </location>
</feature>
<feature type="chain" id="PRO_0000000355" description="Neuronal acetylcholine receptor subunit alpha-4">
    <location>
        <begin position="24"/>
        <end position="622"/>
    </location>
</feature>
<feature type="topological domain" description="Extracellular">
    <location>
        <begin position="24"/>
        <end position="237"/>
    </location>
</feature>
<feature type="transmembrane region" description="Helical">
    <location>
        <begin position="238"/>
        <end position="262"/>
    </location>
</feature>
<feature type="transmembrane region" description="Helical">
    <location>
        <begin position="270"/>
        <end position="288"/>
    </location>
</feature>
<feature type="transmembrane region" description="Helical">
    <location>
        <begin position="304"/>
        <end position="325"/>
    </location>
</feature>
<feature type="topological domain" description="Cytoplasmic">
    <location>
        <begin position="326"/>
        <end position="595"/>
    </location>
</feature>
<feature type="transmembrane region" description="Helical">
    <location>
        <begin position="596"/>
        <end position="614"/>
    </location>
</feature>
<feature type="region of interest" description="Disordered" evidence="7">
    <location>
        <begin position="380"/>
        <end position="477"/>
    </location>
</feature>
<feature type="region of interest" description="Disordered" evidence="7">
    <location>
        <begin position="497"/>
        <end position="516"/>
    </location>
</feature>
<feature type="compositionally biased region" description="Low complexity" evidence="7">
    <location>
        <begin position="390"/>
        <end position="407"/>
    </location>
</feature>
<feature type="compositionally biased region" description="Polar residues" evidence="7">
    <location>
        <begin position="450"/>
        <end position="472"/>
    </location>
</feature>
<feature type="compositionally biased region" description="Polar residues" evidence="7">
    <location>
        <begin position="497"/>
        <end position="508"/>
    </location>
</feature>
<feature type="binding site" evidence="5">
    <location>
        <position position="71"/>
    </location>
    <ligand>
        <name>Ca(2+)</name>
        <dbReference type="ChEBI" id="CHEBI:29108"/>
    </ligand>
</feature>
<feature type="binding site" evidence="5">
    <location>
        <position position="73"/>
    </location>
    <ligand>
        <name>Ca(2+)</name>
        <dbReference type="ChEBI" id="CHEBI:29108"/>
    </ligand>
</feature>
<feature type="lipid moiety-binding region" description="S-palmitoyl cysteine" evidence="3">
    <location>
        <position position="266"/>
    </location>
</feature>
<feature type="glycosylation site" description="N-linked (GlcNAc...) asparagine" evidence="6">
    <location>
        <position position="52"/>
    </location>
</feature>
<feature type="glycosylation site" description="N-linked (GlcNAc...) asparagine" evidence="6">
    <location>
        <position position="102"/>
    </location>
</feature>
<feature type="disulfide bond" evidence="5">
    <location>
        <begin position="156"/>
        <end position="170"/>
    </location>
</feature>
<feature type="disulfide bond" description="Associated with receptor activation" evidence="5">
    <location>
        <begin position="220"/>
        <end position="221"/>
    </location>
</feature>
<feature type="mutagenesis site" description="Reduces channel conductance by 50%." evidence="8">
    <original>E</original>
    <variation>K</variation>
    <location>
        <position position="289"/>
    </location>
</feature>
<reference key="1">
    <citation type="journal article" date="1988" name="EMBO J.">
        <title>Genes expressed in the brain define three distinct neuronal nicotinic acetylcholine receptors.</title>
        <authorList>
            <person name="Nef P."/>
            <person name="Oneyser C."/>
            <person name="Alliod C."/>
            <person name="Couturier S."/>
            <person name="Ballivet M."/>
        </authorList>
    </citation>
    <scope>NUCLEOTIDE SEQUENCE [GENOMIC DNA / MRNA]</scope>
    <source>
        <strain>White leghorn</strain>
        <tissue>Brain</tissue>
    </source>
</reference>
<reference key="2">
    <citation type="journal article" date="1991" name="Nature">
        <title>Pentameric structure and subunit stoichiometry of a neuronal nicotinic acetylcholine receptor.</title>
        <authorList>
            <person name="Cooper E."/>
            <person name="Couturier S."/>
            <person name="Ballivet M."/>
        </authorList>
    </citation>
    <scope>MUTAGENESIS OF GLU-289</scope>
    <scope>SUBUNIT</scope>
</reference>
<evidence type="ECO:0000250" key="1">
    <source>
        <dbReference type="UniProtKB" id="O70174"/>
    </source>
</evidence>
<evidence type="ECO:0000250" key="2">
    <source>
        <dbReference type="UniProtKB" id="P02709"/>
    </source>
</evidence>
<evidence type="ECO:0000250" key="3">
    <source>
        <dbReference type="UniProtKB" id="P04757"/>
    </source>
</evidence>
<evidence type="ECO:0000250" key="4">
    <source>
        <dbReference type="UniProtKB" id="P09483"/>
    </source>
</evidence>
<evidence type="ECO:0000250" key="5">
    <source>
        <dbReference type="UniProtKB" id="P43681"/>
    </source>
</evidence>
<evidence type="ECO:0000255" key="6"/>
<evidence type="ECO:0000256" key="7">
    <source>
        <dbReference type="SAM" id="MobiDB-lite"/>
    </source>
</evidence>
<evidence type="ECO:0000269" key="8">
    <source>
    </source>
</evidence>
<evidence type="ECO:0000305" key="9"/>
<keyword id="KW-0106">Calcium</keyword>
<keyword id="KW-1003">Cell membrane</keyword>
<keyword id="KW-1015">Disulfide bond</keyword>
<keyword id="KW-0325">Glycoprotein</keyword>
<keyword id="KW-0407">Ion channel</keyword>
<keyword id="KW-0406">Ion transport</keyword>
<keyword id="KW-1071">Ligand-gated ion channel</keyword>
<keyword id="KW-0449">Lipoprotein</keyword>
<keyword id="KW-0472">Membrane</keyword>
<keyword id="KW-0479">Metal-binding</keyword>
<keyword id="KW-0564">Palmitate</keyword>
<keyword id="KW-0675">Receptor</keyword>
<keyword id="KW-1185">Reference proteome</keyword>
<keyword id="KW-0732">Signal</keyword>
<keyword id="KW-0770">Synapse</keyword>
<keyword id="KW-0812">Transmembrane</keyword>
<keyword id="KW-1133">Transmembrane helix</keyword>
<keyword id="KW-0813">Transport</keyword>
<comment type="function">
    <text evidence="1 5">Component of neuronal acetylcholine receptors (nAChRs) that function as pentameric, ligand-gated cation channels with high calcium permeability among other activities. nAChRs are excitatory neurotrasnmitter receptors formed by a collection of nAChR subunits known to mediate synaptic transmission in the nervous system and the neuromuscular junction. Each nAchR subunit confers differential attributes to channel properties, including activation, deactivation and desensitization kinetics, pH sensitivity, cation permeability, and binding to allosteric modulators. CHRNA4 forms heteropentameric neuronal acetylcholine receptors with CHRNB2 and CHRNB4, as well as CHRNA5 and CHRNB3 as accesory subunits. Is the most abundant nAChR subtype expressed in the central nervous system (By similarity). Found in two major stoichiometric forms,(CHRNA4)3:(CHRNB2)2 and (CHRNA4)2:(CHRNB2)3, the two stoichiometric forms differ in their unitary conductance, calcium permeability, ACh sensitivity and potentiation by divalent cation (By similarity). Involved in the modulation of calcium-dependent signaling pathways, influences the release of neurotransmitters, including dopamine, glutamate and GABA (By similarity).</text>
</comment>
<comment type="catalytic activity">
    <reaction evidence="5">
        <text>Ca(2+)(in) = Ca(2+)(out)</text>
        <dbReference type="Rhea" id="RHEA:29671"/>
        <dbReference type="ChEBI" id="CHEBI:29108"/>
    </reaction>
</comment>
<comment type="catalytic activity">
    <reaction evidence="2">
        <text>K(+)(in) = K(+)(out)</text>
        <dbReference type="Rhea" id="RHEA:29463"/>
        <dbReference type="ChEBI" id="CHEBI:29103"/>
    </reaction>
</comment>
<comment type="catalytic activity">
    <reaction evidence="5">
        <text>Na(+)(in) = Na(+)(out)</text>
        <dbReference type="Rhea" id="RHEA:34963"/>
        <dbReference type="ChEBI" id="CHEBI:29101"/>
    </reaction>
</comment>
<comment type="activity regulation">
    <text evidence="4 5">Activated by a myriad of ligands such as acetylcholine, cytisine, nicotine, choline and epibatidine. Channel potentiation by calcium is stoichiometry-selective, CHRNA4:CHRNB2 nACh receptor is achieved by calcium association with topographically distinct sites framed by anionic residues within the CHRNA4 subunit and between the CHRNA4 and CHRNB2 subunits (By similarity). nAChR activity is inhibited by the antagonist alpha-conotoxins BuIA, PnIA, GID and MII, small disulfide-constrained peptides from cone snails (By similarity).</text>
</comment>
<comment type="subunit">
    <text evidence="1 5 8">Neuronal AChR is composed of two different types of subunits: alpha and beta. CHRNA4 forms heteropentameric neuronal acetylcholine receptors with CHRNB2 and CHRNB4, as well as CHRNA5 and CHRNB3 as accesory subunits (By similarity). Found in two major stoichiometric forms, LS (low agonist sensitivity): (CHRNA4)3:(CHRNB2)2 and HS (high agonist sensitivity): (CHRNA4)2:(CHRNB2)3, the two stoichiometric forms differ in their unitary conductance, calcium permeability, ACh sensitivity and potentiation by divalent cation. Cells produce predominantly an (CHRNA4)3:(CHRNB2)2 nAChR. The (CHRNA4)2:(CHRNB2)3 expression is selectively up-regulated by nicotine and has lower single channel conductance and calcium permeability (PubMed:2005979). In the striatum, also forms CHRNA4:CHRNA6:CHRNB2 complexes (By similarity). Also found in the stoichiometric form: (CHRNA4:CHRNB2)2:CHRNB3 (By similarity).</text>
</comment>
<comment type="interaction">
    <interactant intactId="EBI-10686088">
        <id>P09482</id>
    </interactant>
    <interactant intactId="EBI-10686072">
        <id>P09484</id>
        <label>CHRNB2</label>
    </interactant>
    <organismsDiffer>false</organismsDiffer>
    <experiments>7</experiments>
</comment>
<comment type="subcellular location">
    <subcellularLocation>
        <location evidence="1">Synaptic cell membrane</location>
        <topology evidence="6">Multi-pass membrane protein</topology>
    </subcellularLocation>
    <subcellularLocation>
        <location evidence="1">Cell membrane</location>
        <topology evidence="6">Multi-pass membrane protein</topology>
    </subcellularLocation>
</comment>
<comment type="similarity">
    <text evidence="9">Belongs to the ligand-gated ion channel (TC 1.A.9) family. Acetylcholine receptor (TC 1.A.9.1) subfamily. Alpha-4/CHRNA4 sub-subfamily.</text>
</comment>
<sequence>MGFLVSKGNLLLLLCASIFPAFGHVETRAHAEERLLKKLFSGYNKWSRPVANISDVVLVRFGLSIAQLIDVDEKNQMMTTNVWVKQEWHDYKLRWDPQEYENVTSIRIPSELIWRPDIVLYNNADGDFAVTHLTKAHLFYDGRIKWMPPAIYKSSCSIDVTFFPFDQQNCKMKFGSWTYDKAKIDLVSMHSHVDQLDYWESGEWVIINAVGNYNSKKYECCTEIYPDITYSFIIRRLPLFYTINLIIPCLLISCLTVLVFYLPSECGEKITLCISVLLSLTVFLLLITEIIPSTSLVIPLIGEYLLFTMIFVTLSIIITVFVLNVHHRSPRTHTMPDWVRRVFLDIVPRLLFMKRPSTVKDNCKKLIESMHKLTNSPRLWSETDMEPNFTTSSSPSPQSNEPSPTSSFCAHLEEPAKPMCKSPSGQYSMLHPEPPQVTCSSPKPSCHPLSDTQTTSISKGRSLSVQQMYSPNKTEEGSIRCRSRSIQYCYLQEDSSQTNGHSSASPASQRCHLNEEQPQHKPHQCKCKCRKGEAAGTPTQGSKSHSNKGEHLVLMSPALKLAVEGVHYIADHLRAEDADFSVKEDWKYVAMVIDRIFLWMFIIVCLLGTVGLFLPPWLAGMI</sequence>
<protein>
    <recommendedName>
        <fullName>Neuronal acetylcholine receptor subunit alpha-4</fullName>
    </recommendedName>
</protein>
<proteinExistence type="evidence at protein level"/>
<organism>
    <name type="scientific">Gallus gallus</name>
    <name type="common">Chicken</name>
    <dbReference type="NCBI Taxonomy" id="9031"/>
    <lineage>
        <taxon>Eukaryota</taxon>
        <taxon>Metazoa</taxon>
        <taxon>Chordata</taxon>
        <taxon>Craniata</taxon>
        <taxon>Vertebrata</taxon>
        <taxon>Euteleostomi</taxon>
        <taxon>Archelosauria</taxon>
        <taxon>Archosauria</taxon>
        <taxon>Dinosauria</taxon>
        <taxon>Saurischia</taxon>
        <taxon>Theropoda</taxon>
        <taxon>Coelurosauria</taxon>
        <taxon>Aves</taxon>
        <taxon>Neognathae</taxon>
        <taxon>Galloanserae</taxon>
        <taxon>Galliformes</taxon>
        <taxon>Phasianidae</taxon>
        <taxon>Phasianinae</taxon>
        <taxon>Gallus</taxon>
    </lineage>
</organism>
<dbReference type="EMBL" id="X07348">
    <property type="protein sequence ID" value="CAA30285.1"/>
    <property type="molecule type" value="Genomic_DNA"/>
</dbReference>
<dbReference type="EMBL" id="X07349">
    <property type="protein sequence ID" value="CAA30285.1"/>
    <property type="status" value="JOINED"/>
    <property type="molecule type" value="Genomic_DNA"/>
</dbReference>
<dbReference type="EMBL" id="X07350">
    <property type="protein sequence ID" value="CAA30285.1"/>
    <property type="status" value="JOINED"/>
    <property type="molecule type" value="Genomic_DNA"/>
</dbReference>
<dbReference type="EMBL" id="X07351">
    <property type="protein sequence ID" value="CAA30285.1"/>
    <property type="status" value="JOINED"/>
    <property type="molecule type" value="Genomic_DNA"/>
</dbReference>
<dbReference type="EMBL" id="X07352">
    <property type="protein sequence ID" value="CAA30285.1"/>
    <property type="status" value="JOINED"/>
    <property type="molecule type" value="Genomic_DNA"/>
</dbReference>
<dbReference type="EMBL" id="X07399">
    <property type="protein sequence ID" value="CAA30285.1"/>
    <property type="status" value="JOINED"/>
    <property type="molecule type" value="Genomic_DNA"/>
</dbReference>
<dbReference type="EMBL" id="AJ250361">
    <property type="protein sequence ID" value="CAB59626.1"/>
    <property type="molecule type" value="mRNA"/>
</dbReference>
<dbReference type="PIR" id="S00379">
    <property type="entry name" value="ACCH4N"/>
</dbReference>
<dbReference type="RefSeq" id="NP_001384279.1">
    <property type="nucleotide sequence ID" value="NM_001397350.1"/>
</dbReference>
<dbReference type="RefSeq" id="NP_990145.1">
    <property type="nucleotide sequence ID" value="NM_204814.1"/>
</dbReference>
<dbReference type="SMR" id="P09482"/>
<dbReference type="ComplexPortal" id="CPX-172">
    <property type="entry name" value="Neuronal nicotinic acetylcholine receptor complex, 3xalpha4-2xbeta2"/>
</dbReference>
<dbReference type="ComplexPortal" id="CPX-173">
    <property type="entry name" value="Neuronal nicotinic acetylcholine receptor complex, 2xalpha4-3xbeta2"/>
</dbReference>
<dbReference type="ComplexPortal" id="CPX-217">
    <property type="entry name" value="Neuronal nicotinic acetylcholine receptor complex, alpha4-alpha5-beta2"/>
</dbReference>
<dbReference type="ComplexPortal" id="CPX-221">
    <property type="entry name" value="Neuronal nicotinic acetylcholine receptor complex, alpha4-beta4"/>
</dbReference>
<dbReference type="FunCoup" id="P09482">
    <property type="interactions" value="88"/>
</dbReference>
<dbReference type="IntAct" id="P09482">
    <property type="interactions" value="1"/>
</dbReference>
<dbReference type="STRING" id="9031.ENSGALP00000009302"/>
<dbReference type="BindingDB" id="P09482"/>
<dbReference type="ChEMBL" id="CHEMBL5569"/>
<dbReference type="DrugCentral" id="P09482"/>
<dbReference type="GlyCosmos" id="P09482">
    <property type="glycosylation" value="2 sites, No reported glycans"/>
</dbReference>
<dbReference type="GlyGen" id="P09482">
    <property type="glycosylation" value="2 sites"/>
</dbReference>
<dbReference type="PaxDb" id="9031-ENSGALP00000009302"/>
<dbReference type="GeneID" id="395606"/>
<dbReference type="KEGG" id="gga:395606"/>
<dbReference type="CTD" id="1137"/>
<dbReference type="VEuPathDB" id="HostDB:geneid_395606"/>
<dbReference type="eggNOG" id="KOG3645">
    <property type="taxonomic scope" value="Eukaryota"/>
</dbReference>
<dbReference type="HOGENOM" id="CLU_018074_1_1_1"/>
<dbReference type="InParanoid" id="P09482"/>
<dbReference type="OMA" id="PRLWSEI"/>
<dbReference type="OrthoDB" id="5975154at2759"/>
<dbReference type="PhylomeDB" id="P09482"/>
<dbReference type="TreeFam" id="TF315605"/>
<dbReference type="Reactome" id="R-GGA-629587">
    <property type="pathway name" value="Highly sodium permeable postsynaptic acetylcholine nicotinic receptors"/>
</dbReference>
<dbReference type="Reactome" id="R-GGA-629594">
    <property type="pathway name" value="Highly calcium permeable postsynaptic nicotinic acetylcholine receptors"/>
</dbReference>
<dbReference type="Reactome" id="R-GGA-629597">
    <property type="pathway name" value="Highly calcium permeable nicotinic acetylcholine receptors"/>
</dbReference>
<dbReference type="PRO" id="PR:P09482"/>
<dbReference type="Proteomes" id="UP000000539">
    <property type="component" value="Chromosome 20"/>
</dbReference>
<dbReference type="Bgee" id="ENSGALG00000005801">
    <property type="expression patterns" value="Expressed in brain and 3 other cell types or tissues"/>
</dbReference>
<dbReference type="GO" id="GO:0005892">
    <property type="term" value="C:acetylcholine-gated channel complex"/>
    <property type="evidence" value="ECO:0000318"/>
    <property type="project" value="GO_Central"/>
</dbReference>
<dbReference type="GO" id="GO:0043005">
    <property type="term" value="C:neuron projection"/>
    <property type="evidence" value="ECO:0000318"/>
    <property type="project" value="GO_Central"/>
</dbReference>
<dbReference type="GO" id="GO:0005886">
    <property type="term" value="C:plasma membrane"/>
    <property type="evidence" value="ECO:0000318"/>
    <property type="project" value="GO_Central"/>
</dbReference>
<dbReference type="GO" id="GO:0045211">
    <property type="term" value="C:postsynaptic membrane"/>
    <property type="evidence" value="ECO:0007669"/>
    <property type="project" value="UniProtKB-KW"/>
</dbReference>
<dbReference type="GO" id="GO:0045202">
    <property type="term" value="C:synapse"/>
    <property type="evidence" value="ECO:0000318"/>
    <property type="project" value="GO_Central"/>
</dbReference>
<dbReference type="GO" id="GO:0022848">
    <property type="term" value="F:acetylcholine-gated monoatomic cation-selective channel activity"/>
    <property type="evidence" value="ECO:0000250"/>
    <property type="project" value="UniProtKB"/>
</dbReference>
<dbReference type="GO" id="GO:0004888">
    <property type="term" value="F:transmembrane signaling receptor activity"/>
    <property type="evidence" value="ECO:0007669"/>
    <property type="project" value="InterPro"/>
</dbReference>
<dbReference type="GO" id="GO:0095500">
    <property type="term" value="P:acetylcholine receptor signaling pathway"/>
    <property type="evidence" value="ECO:0000250"/>
    <property type="project" value="UniProtKB"/>
</dbReference>
<dbReference type="GO" id="GO:0051899">
    <property type="term" value="P:membrane depolarization"/>
    <property type="evidence" value="ECO:0000318"/>
    <property type="project" value="GO_Central"/>
</dbReference>
<dbReference type="GO" id="GO:0034220">
    <property type="term" value="P:monoatomic ion transmembrane transport"/>
    <property type="evidence" value="ECO:0000318"/>
    <property type="project" value="GO_Central"/>
</dbReference>
<dbReference type="GO" id="GO:0007274">
    <property type="term" value="P:neuromuscular synaptic transmission"/>
    <property type="evidence" value="ECO:0000318"/>
    <property type="project" value="GO_Central"/>
</dbReference>
<dbReference type="GO" id="GO:0035094">
    <property type="term" value="P:response to nicotine"/>
    <property type="evidence" value="ECO:0000318"/>
    <property type="project" value="GO_Central"/>
</dbReference>
<dbReference type="GO" id="GO:0007271">
    <property type="term" value="P:synaptic transmission, cholinergic"/>
    <property type="evidence" value="ECO:0000250"/>
    <property type="project" value="UniProtKB"/>
</dbReference>
<dbReference type="CDD" id="cd19064">
    <property type="entry name" value="LGIC_TM_nAChR"/>
    <property type="match status" value="1"/>
</dbReference>
<dbReference type="FunFam" id="1.20.58.390:FF:000014">
    <property type="entry name" value="Neuronal nicotinic acetylcholine receptor alpha4 subunit"/>
    <property type="match status" value="1"/>
</dbReference>
<dbReference type="FunFam" id="2.70.170.10:FF:000005">
    <property type="entry name" value="Neuronal nicotinic acetylcholine receptor alpha4 subunit"/>
    <property type="match status" value="1"/>
</dbReference>
<dbReference type="FunFam" id="1.20.58.390:FF:000001">
    <property type="entry name" value="Neuronal nicotinic acetylcholine receptor subunit 3"/>
    <property type="match status" value="1"/>
</dbReference>
<dbReference type="Gene3D" id="2.70.170.10">
    <property type="entry name" value="Neurotransmitter-gated ion-channel ligand-binding domain"/>
    <property type="match status" value="1"/>
</dbReference>
<dbReference type="Gene3D" id="1.20.58.390">
    <property type="entry name" value="Neurotransmitter-gated ion-channel transmembrane domain"/>
    <property type="match status" value="2"/>
</dbReference>
<dbReference type="InterPro" id="IPR006202">
    <property type="entry name" value="Neur_chan_lig-bd"/>
</dbReference>
<dbReference type="InterPro" id="IPR036734">
    <property type="entry name" value="Neur_chan_lig-bd_sf"/>
</dbReference>
<dbReference type="InterPro" id="IPR006201">
    <property type="entry name" value="Neur_channel"/>
</dbReference>
<dbReference type="InterPro" id="IPR036719">
    <property type="entry name" value="Neuro-gated_channel_TM_sf"/>
</dbReference>
<dbReference type="InterPro" id="IPR038050">
    <property type="entry name" value="Neuro_actylchol_rec"/>
</dbReference>
<dbReference type="InterPro" id="IPR006029">
    <property type="entry name" value="Neurotrans-gated_channel_TM"/>
</dbReference>
<dbReference type="InterPro" id="IPR018000">
    <property type="entry name" value="Neurotransmitter_ion_chnl_CS"/>
</dbReference>
<dbReference type="InterPro" id="IPR002394">
    <property type="entry name" value="Nicotinic_acetylcholine_rcpt"/>
</dbReference>
<dbReference type="NCBIfam" id="TIGR00860">
    <property type="entry name" value="LIC"/>
    <property type="match status" value="1"/>
</dbReference>
<dbReference type="PANTHER" id="PTHR18945">
    <property type="entry name" value="NEUROTRANSMITTER GATED ION CHANNEL"/>
    <property type="match status" value="1"/>
</dbReference>
<dbReference type="Pfam" id="PF02931">
    <property type="entry name" value="Neur_chan_LBD"/>
    <property type="match status" value="1"/>
</dbReference>
<dbReference type="Pfam" id="PF02932">
    <property type="entry name" value="Neur_chan_memb"/>
    <property type="match status" value="2"/>
</dbReference>
<dbReference type="PRINTS" id="PR00254">
    <property type="entry name" value="NICOTINICR"/>
</dbReference>
<dbReference type="PRINTS" id="PR00252">
    <property type="entry name" value="NRIONCHANNEL"/>
</dbReference>
<dbReference type="SUPFAM" id="SSF90112">
    <property type="entry name" value="Neurotransmitter-gated ion-channel transmembrane pore"/>
    <property type="match status" value="1"/>
</dbReference>
<dbReference type="SUPFAM" id="SSF63712">
    <property type="entry name" value="Nicotinic receptor ligand binding domain-like"/>
    <property type="match status" value="1"/>
</dbReference>
<dbReference type="PROSITE" id="PS00236">
    <property type="entry name" value="NEUROTR_ION_CHANNEL"/>
    <property type="match status" value="1"/>
</dbReference>
<gene>
    <name type="primary">CHRNA4</name>
</gene>
<name>ACHA4_CHICK</name>
<accession>P09482</accession>